<dbReference type="EC" id="2.7.8.13" evidence="1"/>
<dbReference type="EMBL" id="CP000826">
    <property type="protein sequence ID" value="ABV39864.1"/>
    <property type="molecule type" value="Genomic_DNA"/>
</dbReference>
<dbReference type="SMR" id="A8G9S4"/>
<dbReference type="STRING" id="399741.Spro_0758"/>
<dbReference type="KEGG" id="spe:Spro_0758"/>
<dbReference type="eggNOG" id="COG0472">
    <property type="taxonomic scope" value="Bacteria"/>
</dbReference>
<dbReference type="HOGENOM" id="CLU_023982_0_0_6"/>
<dbReference type="OrthoDB" id="9805475at2"/>
<dbReference type="UniPathway" id="UPA00219"/>
<dbReference type="GO" id="GO:0005886">
    <property type="term" value="C:plasma membrane"/>
    <property type="evidence" value="ECO:0007669"/>
    <property type="project" value="UniProtKB-SubCell"/>
</dbReference>
<dbReference type="GO" id="GO:0046872">
    <property type="term" value="F:metal ion binding"/>
    <property type="evidence" value="ECO:0007669"/>
    <property type="project" value="UniProtKB-KW"/>
</dbReference>
<dbReference type="GO" id="GO:0008963">
    <property type="term" value="F:phospho-N-acetylmuramoyl-pentapeptide-transferase activity"/>
    <property type="evidence" value="ECO:0007669"/>
    <property type="project" value="UniProtKB-UniRule"/>
</dbReference>
<dbReference type="GO" id="GO:0051992">
    <property type="term" value="F:UDP-N-acetylmuramoyl-L-alanyl-D-glutamyl-meso-2,6-diaminopimelyl-D-alanyl-D-alanine:undecaprenyl-phosphate transferase activity"/>
    <property type="evidence" value="ECO:0007669"/>
    <property type="project" value="RHEA"/>
</dbReference>
<dbReference type="GO" id="GO:0051301">
    <property type="term" value="P:cell division"/>
    <property type="evidence" value="ECO:0007669"/>
    <property type="project" value="UniProtKB-KW"/>
</dbReference>
<dbReference type="GO" id="GO:0071555">
    <property type="term" value="P:cell wall organization"/>
    <property type="evidence" value="ECO:0007669"/>
    <property type="project" value="UniProtKB-KW"/>
</dbReference>
<dbReference type="GO" id="GO:0009252">
    <property type="term" value="P:peptidoglycan biosynthetic process"/>
    <property type="evidence" value="ECO:0007669"/>
    <property type="project" value="UniProtKB-UniRule"/>
</dbReference>
<dbReference type="GO" id="GO:0008360">
    <property type="term" value="P:regulation of cell shape"/>
    <property type="evidence" value="ECO:0007669"/>
    <property type="project" value="UniProtKB-KW"/>
</dbReference>
<dbReference type="CDD" id="cd06852">
    <property type="entry name" value="GT_MraY"/>
    <property type="match status" value="1"/>
</dbReference>
<dbReference type="HAMAP" id="MF_00038">
    <property type="entry name" value="MraY"/>
    <property type="match status" value="1"/>
</dbReference>
<dbReference type="InterPro" id="IPR000715">
    <property type="entry name" value="Glycosyl_transferase_4"/>
</dbReference>
<dbReference type="InterPro" id="IPR003524">
    <property type="entry name" value="PNAcMuramoyl-5peptid_Trfase"/>
</dbReference>
<dbReference type="InterPro" id="IPR018480">
    <property type="entry name" value="PNAcMuramoyl-5peptid_Trfase_CS"/>
</dbReference>
<dbReference type="NCBIfam" id="TIGR00445">
    <property type="entry name" value="mraY"/>
    <property type="match status" value="1"/>
</dbReference>
<dbReference type="PANTHER" id="PTHR22926">
    <property type="entry name" value="PHOSPHO-N-ACETYLMURAMOYL-PENTAPEPTIDE-TRANSFERASE"/>
    <property type="match status" value="1"/>
</dbReference>
<dbReference type="PANTHER" id="PTHR22926:SF5">
    <property type="entry name" value="PHOSPHO-N-ACETYLMURAMOYL-PENTAPEPTIDE-TRANSFERASE HOMOLOG"/>
    <property type="match status" value="1"/>
</dbReference>
<dbReference type="Pfam" id="PF00953">
    <property type="entry name" value="Glycos_transf_4"/>
    <property type="match status" value="1"/>
</dbReference>
<dbReference type="Pfam" id="PF10555">
    <property type="entry name" value="MraY_sig1"/>
    <property type="match status" value="1"/>
</dbReference>
<dbReference type="PROSITE" id="PS01347">
    <property type="entry name" value="MRAY_1"/>
    <property type="match status" value="1"/>
</dbReference>
<dbReference type="PROSITE" id="PS01348">
    <property type="entry name" value="MRAY_2"/>
    <property type="match status" value="1"/>
</dbReference>
<keyword id="KW-0131">Cell cycle</keyword>
<keyword id="KW-0132">Cell division</keyword>
<keyword id="KW-0997">Cell inner membrane</keyword>
<keyword id="KW-1003">Cell membrane</keyword>
<keyword id="KW-0133">Cell shape</keyword>
<keyword id="KW-0961">Cell wall biogenesis/degradation</keyword>
<keyword id="KW-0460">Magnesium</keyword>
<keyword id="KW-0472">Membrane</keyword>
<keyword id="KW-0479">Metal-binding</keyword>
<keyword id="KW-0573">Peptidoglycan synthesis</keyword>
<keyword id="KW-0808">Transferase</keyword>
<keyword id="KW-0812">Transmembrane</keyword>
<keyword id="KW-1133">Transmembrane helix</keyword>
<accession>A8G9S4</accession>
<protein>
    <recommendedName>
        <fullName evidence="1">Phospho-N-acetylmuramoyl-pentapeptide-transferase</fullName>
        <ecNumber evidence="1">2.7.8.13</ecNumber>
    </recommendedName>
    <alternativeName>
        <fullName evidence="1">UDP-MurNAc-pentapeptide phosphotransferase</fullName>
    </alternativeName>
</protein>
<feature type="chain" id="PRO_1000057285" description="Phospho-N-acetylmuramoyl-pentapeptide-transferase">
    <location>
        <begin position="1"/>
        <end position="360"/>
    </location>
</feature>
<feature type="transmembrane region" description="Helical" evidence="1">
    <location>
        <begin position="18"/>
        <end position="38"/>
    </location>
</feature>
<feature type="transmembrane region" description="Helical" evidence="1">
    <location>
        <begin position="72"/>
        <end position="92"/>
    </location>
</feature>
<feature type="transmembrane region" description="Helical" evidence="1">
    <location>
        <begin position="94"/>
        <end position="114"/>
    </location>
</feature>
<feature type="transmembrane region" description="Helical" evidence="1">
    <location>
        <begin position="132"/>
        <end position="152"/>
    </location>
</feature>
<feature type="transmembrane region" description="Helical" evidence="1">
    <location>
        <begin position="168"/>
        <end position="188"/>
    </location>
</feature>
<feature type="transmembrane region" description="Helical" evidence="1">
    <location>
        <begin position="199"/>
        <end position="219"/>
    </location>
</feature>
<feature type="transmembrane region" description="Helical" evidence="1">
    <location>
        <begin position="236"/>
        <end position="256"/>
    </location>
</feature>
<feature type="transmembrane region" description="Helical" evidence="1">
    <location>
        <begin position="263"/>
        <end position="283"/>
    </location>
</feature>
<feature type="transmembrane region" description="Helical" evidence="1">
    <location>
        <begin position="288"/>
        <end position="308"/>
    </location>
</feature>
<feature type="transmembrane region" description="Helical" evidence="1">
    <location>
        <begin position="338"/>
        <end position="358"/>
    </location>
</feature>
<name>MRAY_SERP5</name>
<comment type="function">
    <text evidence="1">Catalyzes the initial step of the lipid cycle reactions in the biosynthesis of the cell wall peptidoglycan: transfers peptidoglycan precursor phospho-MurNAc-pentapeptide from UDP-MurNAc-pentapeptide onto the lipid carrier undecaprenyl phosphate, yielding undecaprenyl-pyrophosphoryl-MurNAc-pentapeptide, known as lipid I.</text>
</comment>
<comment type="catalytic activity">
    <reaction evidence="1">
        <text>UDP-N-acetyl-alpha-D-muramoyl-L-alanyl-gamma-D-glutamyl-meso-2,6-diaminopimeloyl-D-alanyl-D-alanine + di-trans,octa-cis-undecaprenyl phosphate = di-trans,octa-cis-undecaprenyl diphospho-N-acetyl-alpha-D-muramoyl-L-alanyl-D-glutamyl-meso-2,6-diaminopimeloyl-D-alanyl-D-alanine + UMP</text>
        <dbReference type="Rhea" id="RHEA:28386"/>
        <dbReference type="ChEBI" id="CHEBI:57865"/>
        <dbReference type="ChEBI" id="CHEBI:60392"/>
        <dbReference type="ChEBI" id="CHEBI:61386"/>
        <dbReference type="ChEBI" id="CHEBI:61387"/>
        <dbReference type="EC" id="2.7.8.13"/>
    </reaction>
</comment>
<comment type="cofactor">
    <cofactor evidence="1">
        <name>Mg(2+)</name>
        <dbReference type="ChEBI" id="CHEBI:18420"/>
    </cofactor>
</comment>
<comment type="pathway">
    <text evidence="1">Cell wall biogenesis; peptidoglycan biosynthesis.</text>
</comment>
<comment type="subcellular location">
    <subcellularLocation>
        <location evidence="1">Cell inner membrane</location>
        <topology evidence="1">Multi-pass membrane protein</topology>
    </subcellularLocation>
</comment>
<comment type="similarity">
    <text evidence="1">Belongs to the glycosyltransferase 4 family. MraY subfamily.</text>
</comment>
<organism>
    <name type="scientific">Serratia proteamaculans (strain 568)</name>
    <dbReference type="NCBI Taxonomy" id="399741"/>
    <lineage>
        <taxon>Bacteria</taxon>
        <taxon>Pseudomonadati</taxon>
        <taxon>Pseudomonadota</taxon>
        <taxon>Gammaproteobacteria</taxon>
        <taxon>Enterobacterales</taxon>
        <taxon>Yersiniaceae</taxon>
        <taxon>Serratia</taxon>
    </lineage>
</organism>
<proteinExistence type="inferred from homology"/>
<gene>
    <name evidence="1" type="primary">mraY</name>
    <name type="ordered locus">Spro_0758</name>
</gene>
<reference key="1">
    <citation type="submission" date="2007-09" db="EMBL/GenBank/DDBJ databases">
        <title>Complete sequence of chromosome of Serratia proteamaculans 568.</title>
        <authorList>
            <consortium name="US DOE Joint Genome Institute"/>
            <person name="Copeland A."/>
            <person name="Lucas S."/>
            <person name="Lapidus A."/>
            <person name="Barry K."/>
            <person name="Glavina del Rio T."/>
            <person name="Dalin E."/>
            <person name="Tice H."/>
            <person name="Pitluck S."/>
            <person name="Chain P."/>
            <person name="Malfatti S."/>
            <person name="Shin M."/>
            <person name="Vergez L."/>
            <person name="Schmutz J."/>
            <person name="Larimer F."/>
            <person name="Land M."/>
            <person name="Hauser L."/>
            <person name="Kyrpides N."/>
            <person name="Kim E."/>
            <person name="Taghavi S."/>
            <person name="Newman L."/>
            <person name="Vangronsveld J."/>
            <person name="van der Lelie D."/>
            <person name="Richardson P."/>
        </authorList>
    </citation>
    <scope>NUCLEOTIDE SEQUENCE [LARGE SCALE GENOMIC DNA]</scope>
    <source>
        <strain>568</strain>
    </source>
</reference>
<sequence length="360" mass="40091">MLVWLAEHLVKYYSGFNVFSYLTFRAIVSLLTALFLSLWMGPRVIKRLQEMSFGQVVRNDGPESHFSKRGTPTMGGIMILTSITVSVLMWAYPSNPYVWCVLFVLVGYGIVGFVDDYRKVVRKDTKGLIARWKYFWQSVIALVVAFAMYAVGKDTPATELVVPFFKDIMPQLGLLYVLLAYFVIVGTSNAVNLTDGLDGLAIMPTVFVAAGFALVAWATGNMNFANYLHIPYLRHAGELVIVCTAIVGAGLGFLWFNTYPAQVFMGDVGSLALGGALGTIAVLLRQEFLLLIMGGVFVVETLSVILQVGSFKLRGQRIFRMAPIHHHYELKGWPEPRVIVRFWIISLMLVLIGLATLKVR</sequence>
<evidence type="ECO:0000255" key="1">
    <source>
        <dbReference type="HAMAP-Rule" id="MF_00038"/>
    </source>
</evidence>